<name>PCP_STRPQ</name>
<dbReference type="EC" id="3.4.19.3" evidence="1"/>
<dbReference type="EMBL" id="BA000034">
    <property type="protein sequence ID" value="BAC64593.1"/>
    <property type="molecule type" value="Genomic_DNA"/>
</dbReference>
<dbReference type="RefSeq" id="WP_011054262.1">
    <property type="nucleotide sequence ID" value="NC_004606.1"/>
</dbReference>
<dbReference type="SMR" id="P0DC95"/>
<dbReference type="MEROPS" id="C15.001"/>
<dbReference type="KEGG" id="sps:SPs1498"/>
<dbReference type="HOGENOM" id="CLU_043960_4_0_9"/>
<dbReference type="GO" id="GO:0005829">
    <property type="term" value="C:cytosol"/>
    <property type="evidence" value="ECO:0007669"/>
    <property type="project" value="InterPro"/>
</dbReference>
<dbReference type="GO" id="GO:0016920">
    <property type="term" value="F:pyroglutamyl-peptidase activity"/>
    <property type="evidence" value="ECO:0007669"/>
    <property type="project" value="UniProtKB-UniRule"/>
</dbReference>
<dbReference type="GO" id="GO:0006508">
    <property type="term" value="P:proteolysis"/>
    <property type="evidence" value="ECO:0007669"/>
    <property type="project" value="UniProtKB-KW"/>
</dbReference>
<dbReference type="CDD" id="cd00501">
    <property type="entry name" value="Peptidase_C15"/>
    <property type="match status" value="1"/>
</dbReference>
<dbReference type="FunFam" id="3.40.630.20:FF:000001">
    <property type="entry name" value="Pyrrolidone-carboxylate peptidase"/>
    <property type="match status" value="1"/>
</dbReference>
<dbReference type="Gene3D" id="3.40.630.20">
    <property type="entry name" value="Peptidase C15, pyroglutamyl peptidase I-like"/>
    <property type="match status" value="1"/>
</dbReference>
<dbReference type="HAMAP" id="MF_00417">
    <property type="entry name" value="Pyrrolid_peptidase"/>
    <property type="match status" value="1"/>
</dbReference>
<dbReference type="InterPro" id="IPR000816">
    <property type="entry name" value="Peptidase_C15"/>
</dbReference>
<dbReference type="InterPro" id="IPR016125">
    <property type="entry name" value="Peptidase_C15-like"/>
</dbReference>
<dbReference type="InterPro" id="IPR036440">
    <property type="entry name" value="Peptidase_C15-like_sf"/>
</dbReference>
<dbReference type="InterPro" id="IPR029762">
    <property type="entry name" value="PGP-I_bact-type"/>
</dbReference>
<dbReference type="InterPro" id="IPR033694">
    <property type="entry name" value="PGPEP1_Cys_AS"/>
</dbReference>
<dbReference type="InterPro" id="IPR033693">
    <property type="entry name" value="PGPEP1_Glu_AS"/>
</dbReference>
<dbReference type="NCBIfam" id="NF009676">
    <property type="entry name" value="PRK13197.1"/>
    <property type="match status" value="1"/>
</dbReference>
<dbReference type="NCBIfam" id="TIGR00504">
    <property type="entry name" value="pyro_pdase"/>
    <property type="match status" value="1"/>
</dbReference>
<dbReference type="PANTHER" id="PTHR23402">
    <property type="entry name" value="PROTEASE FAMILY C15 PYROGLUTAMYL-PEPTIDASE I-RELATED"/>
    <property type="match status" value="1"/>
</dbReference>
<dbReference type="PANTHER" id="PTHR23402:SF1">
    <property type="entry name" value="PYROGLUTAMYL-PEPTIDASE I"/>
    <property type="match status" value="1"/>
</dbReference>
<dbReference type="Pfam" id="PF01470">
    <property type="entry name" value="Peptidase_C15"/>
    <property type="match status" value="1"/>
</dbReference>
<dbReference type="PIRSF" id="PIRSF015592">
    <property type="entry name" value="Prld-crbxl_pptds"/>
    <property type="match status" value="1"/>
</dbReference>
<dbReference type="PRINTS" id="PR00706">
    <property type="entry name" value="PYROGLUPTASE"/>
</dbReference>
<dbReference type="SUPFAM" id="SSF53182">
    <property type="entry name" value="Pyrrolidone carboxyl peptidase (pyroglutamate aminopeptidase)"/>
    <property type="match status" value="1"/>
</dbReference>
<dbReference type="PROSITE" id="PS01334">
    <property type="entry name" value="PYRASE_CYS"/>
    <property type="match status" value="1"/>
</dbReference>
<dbReference type="PROSITE" id="PS01333">
    <property type="entry name" value="PYRASE_GLU"/>
    <property type="match status" value="1"/>
</dbReference>
<accession>P0DC95</accession>
<accession>Q8K8C4</accession>
<proteinExistence type="inferred from homology"/>
<reference key="1">
    <citation type="journal article" date="2003" name="Genome Res.">
        <title>Genome sequence of an M3 strain of Streptococcus pyogenes reveals a large-scale genomic rearrangement in invasive strains and new insights into phage evolution.</title>
        <authorList>
            <person name="Nakagawa I."/>
            <person name="Kurokawa K."/>
            <person name="Yamashita A."/>
            <person name="Nakata M."/>
            <person name="Tomiyasu Y."/>
            <person name="Okahashi N."/>
            <person name="Kawabata S."/>
            <person name="Yamazaki K."/>
            <person name="Shiba T."/>
            <person name="Yasunaga T."/>
            <person name="Hayashi H."/>
            <person name="Hattori M."/>
            <person name="Hamada S."/>
        </authorList>
    </citation>
    <scope>NUCLEOTIDE SEQUENCE [LARGE SCALE GENOMIC DNA]</scope>
    <source>
        <strain>SSI-1</strain>
    </source>
</reference>
<evidence type="ECO:0000255" key="1">
    <source>
        <dbReference type="HAMAP-Rule" id="MF_00417"/>
    </source>
</evidence>
<feature type="chain" id="PRO_0000411435" description="Pyrrolidone-carboxylate peptidase">
    <location>
        <begin position="1"/>
        <end position="215"/>
    </location>
</feature>
<feature type="active site" evidence="1">
    <location>
        <position position="78"/>
    </location>
</feature>
<feature type="active site" evidence="1">
    <location>
        <position position="141"/>
    </location>
</feature>
<feature type="active site" evidence="1">
    <location>
        <position position="165"/>
    </location>
</feature>
<sequence>MKILVTGFDPFGGEAINPALEAIKKLPATIHGAEIKCIEVPTVFQKSADVLQQHIESFQPDAVLCIGQAGGRTGLTPERVAINQDDARIPDNEGNQPIDTPIRVDGKAAYFSTLPIKAMVAAIHQAGLPASVSNTAGTFVCNHLMYQALYLVDKYCPNAKAGFMHIPFMMEQVVDKPNTAAMNLDDITRGIEAAIFAIVDFKDRSDLKRVGGATH</sequence>
<comment type="function">
    <text evidence="1">Removes 5-oxoproline from various penultimate amino acid residues except L-proline.</text>
</comment>
<comment type="catalytic activity">
    <reaction evidence="1">
        <text>Release of an N-terminal pyroglutamyl group from a polypeptide, the second amino acid generally not being Pro.</text>
        <dbReference type="EC" id="3.4.19.3"/>
    </reaction>
</comment>
<comment type="subunit">
    <text evidence="1">Homotetramer.</text>
</comment>
<comment type="subcellular location">
    <subcellularLocation>
        <location evidence="1">Cytoplasm</location>
    </subcellularLocation>
</comment>
<comment type="similarity">
    <text evidence="1">Belongs to the peptidase C15 family.</text>
</comment>
<organism>
    <name type="scientific">Streptococcus pyogenes serotype M3 (strain SSI-1)</name>
    <dbReference type="NCBI Taxonomy" id="193567"/>
    <lineage>
        <taxon>Bacteria</taxon>
        <taxon>Bacillati</taxon>
        <taxon>Bacillota</taxon>
        <taxon>Bacilli</taxon>
        <taxon>Lactobacillales</taxon>
        <taxon>Streptococcaceae</taxon>
        <taxon>Streptococcus</taxon>
    </lineage>
</organism>
<keyword id="KW-0963">Cytoplasm</keyword>
<keyword id="KW-0378">Hydrolase</keyword>
<keyword id="KW-0645">Protease</keyword>
<keyword id="KW-0788">Thiol protease</keyword>
<gene>
    <name evidence="1" type="primary">pcp</name>
    <name type="ordered locus">SPs1498</name>
</gene>
<protein>
    <recommendedName>
        <fullName evidence="1">Pyrrolidone-carboxylate peptidase</fullName>
        <ecNumber evidence="1">3.4.19.3</ecNumber>
    </recommendedName>
    <alternativeName>
        <fullName evidence="1">5-oxoprolyl-peptidase</fullName>
    </alternativeName>
    <alternativeName>
        <fullName evidence="1">Pyroglutamyl-peptidase I</fullName>
        <shortName evidence="1">PGP-I</shortName>
        <shortName evidence="1">Pyrase</shortName>
    </alternativeName>
</protein>